<keyword id="KW-0002">3D-structure</keyword>
<keyword id="KW-0025">Alternative splicing</keyword>
<keyword id="KW-0106">Calcium</keyword>
<keyword id="KW-0225">Disease variant</keyword>
<keyword id="KW-0325">Glycoprotein</keyword>
<keyword id="KW-0479">Metal-binding</keyword>
<keyword id="KW-0514">Muscle protein</keyword>
<keyword id="KW-0597">Phosphoprotein</keyword>
<keyword id="KW-1267">Proteomics identification</keyword>
<keyword id="KW-1185">Reference proteome</keyword>
<keyword id="KW-0703">Sarcoplasmic reticulum</keyword>
<keyword id="KW-0732">Signal</keyword>
<protein>
    <recommendedName>
        <fullName>Calsequestrin-2</fullName>
    </recommendedName>
    <alternativeName>
        <fullName>Calsequestrin, cardiac muscle isoform</fullName>
    </alternativeName>
</protein>
<gene>
    <name type="primary">CASQ2</name>
</gene>
<name>CASQ2_HUMAN</name>
<sequence>MKRTHLFIVGIYFLSSCRAEEGLNFPTYDGKDRVVSLSEKNFKQVLKKYDLLCLYYHEPVSSDKVTQKQFQLKEIVLELVAQVLEHKAIGFVMVDAKKEAKLAKKLGFDEEGSLYILKGDRTIEFDGEFAADVLVEFLLDLIEDPVEIISSKLEVQAFERIEDYIKLIGFFKSEDSEYYKAFEEAAEHFQPYIKFFATFDKGVAKKLSLKMNEVDFYEPFMDEPIAIPNKPYTEEELVEFVKEHQRPTLRRLRPEEMFETWEDDLNGIHIVAFAEKSDPDGYEFLEILKQVARDNTDNPDLSILWIDPDDFPLLVAYWEKTFKIDLFRPQIGVVNVTDADSVWMEIPDDDDLPTAEELEDWIEDVLSGKINTEDDDEDDDDDDNSDEEDNDDSDDDDDE</sequence>
<accession>O14958</accession>
<accession>B2R7M6</accession>
<accession>B4DIB0</accession>
<accession>Q5T1D2</accession>
<accession>Q8TBW8</accession>
<feature type="signal peptide" evidence="1">
    <location>
        <begin position="1"/>
        <end position="19"/>
    </location>
</feature>
<feature type="chain" id="PRO_0000004218" description="Calsequestrin-2">
    <location>
        <begin position="20"/>
        <end position="399"/>
    </location>
</feature>
<feature type="region of interest" description="Disordered" evidence="4">
    <location>
        <begin position="365"/>
        <end position="399"/>
    </location>
</feature>
<feature type="compositionally biased region" description="Acidic residues" evidence="4">
    <location>
        <begin position="373"/>
        <end position="399"/>
    </location>
</feature>
<feature type="modified residue" description="Phosphotyrosine" evidence="2">
    <location>
        <position position="282"/>
    </location>
</feature>
<feature type="modified residue" description="Phosphoserine" evidence="11">
    <location>
        <position position="385"/>
    </location>
</feature>
<feature type="modified residue" description="Phosphoserine" evidence="11">
    <location>
        <position position="393"/>
    </location>
</feature>
<feature type="glycosylation site" description="N-linked (GlcNAc...) asparagine" evidence="3">
    <location>
        <position position="335"/>
    </location>
</feature>
<feature type="splice variant" id="VSP_056477" description="In isoform 2." evidence="13">
    <original>GFDEEGSLYILKGDRTIEFDGEFAADVLVEFLLDLIEDPVEIISSKLEVQAFERIEDYIKLIGFFKSEDSEY</original>
    <variation>D</variation>
    <location>
        <begin position="107"/>
        <end position="178"/>
    </location>
</feature>
<feature type="sequence variant" id="VAR_055234" description="In CPVT2; reduces calcium-dependent dimerization; dbSNP:rs749547712." evidence="9 10">
    <original>R</original>
    <variation>Q</variation>
    <location>
        <position position="33"/>
    </location>
</feature>
<feature type="sequence variant" id="VAR_023692" description="No effect on calcium-binding and calcium-dependent dimerization; dbSNP:rs4074536." evidence="6 9">
    <original>T</original>
    <variation>A</variation>
    <location>
        <position position="66"/>
    </location>
</feature>
<feature type="sequence variant" id="VAR_023693" description="Increases dimerization in the absence of calcium; dbSNP:rs10801999." evidence="6 9">
    <original>V</original>
    <variation>M</variation>
    <location>
        <position position="76"/>
    </location>
</feature>
<feature type="sequence variant" id="VAR_044118" description="In CPVT2; alters protein folding; reduces calcium-binding; reduces calcium-dependent oligomerization; decreases sarcoplasmic reticulum Ca(2+) storing capacity; reduces the amplitude of I(Ca)-induced Ca(2+) transients; reduces spontaneous Ca(2+) sparks in permeabilized myocytes; dbSNP:rs121434550." evidence="8 9 10">
    <original>L</original>
    <variation>H</variation>
    <location>
        <position position="167"/>
    </location>
</feature>
<feature type="sequence variant" id="VAR_076546" description="In CPVT2; dbSNP:rs886039816." evidence="12">
    <original>K</original>
    <variation>R</variation>
    <location>
        <position position="180"/>
    </location>
</feature>
<feature type="sequence variant" id="VAR_067036" description="In dbSNP:rs28730716.">
    <original>H</original>
    <variation>R</variation>
    <location>
        <position position="244"/>
    </location>
</feature>
<feature type="sequence variant" id="VAR_016075" description="In CPVT2; reduces calcium-binding; impairs calcium-dependent oligomerization; causes 50% decrease in calcium-dependent binding to TRDN; causes 50% decrease in calcium-dependent binding to ASPH; dbSNP:rs121434549." evidence="5 7 9">
    <original>D</original>
    <variation>H</variation>
    <location>
        <position position="307"/>
    </location>
</feature>
<feature type="sequence variant" id="VAR_067037" description="In dbSNP:rs28730712.">
    <original>N</original>
    <variation>K</variation>
    <location>
        <position position="335"/>
    </location>
</feature>
<feature type="sequence conflict" description="In Ref. 1; BAA23494." evidence="14" ref="1">
    <original>Q</original>
    <variation>P</variation>
    <location>
        <position position="67"/>
    </location>
</feature>
<feature type="sequence conflict" description="In Ref. 2; BAG35873." evidence="14" ref="2">
    <original>D</original>
    <variation>G</variation>
    <location>
        <position position="175"/>
    </location>
</feature>
<feature type="helix" evidence="15">
    <location>
        <begin position="41"/>
        <end position="48"/>
    </location>
</feature>
<feature type="strand" evidence="15">
    <location>
        <begin position="50"/>
        <end position="56"/>
    </location>
</feature>
<feature type="helix" evidence="15">
    <location>
        <begin position="71"/>
        <end position="83"/>
    </location>
</feature>
<feature type="turn" evidence="15">
    <location>
        <begin position="84"/>
        <end position="86"/>
    </location>
</feature>
<feature type="strand" evidence="15">
    <location>
        <begin position="87"/>
        <end position="94"/>
    </location>
</feature>
<feature type="strand" evidence="15">
    <location>
        <begin position="96"/>
        <end position="98"/>
    </location>
</feature>
<feature type="helix" evidence="15">
    <location>
        <begin position="100"/>
        <end position="106"/>
    </location>
</feature>
<feature type="strand" evidence="15">
    <location>
        <begin position="114"/>
        <end position="118"/>
    </location>
</feature>
<feature type="strand" evidence="15">
    <location>
        <begin position="121"/>
        <end position="125"/>
    </location>
</feature>
<feature type="helix" evidence="15">
    <location>
        <begin position="131"/>
        <end position="142"/>
    </location>
</feature>
<feature type="strand" evidence="15">
    <location>
        <begin position="145"/>
        <end position="148"/>
    </location>
</feature>
<feature type="helix" evidence="15">
    <location>
        <begin position="152"/>
        <end position="160"/>
    </location>
</feature>
<feature type="strand" evidence="15">
    <location>
        <begin position="166"/>
        <end position="170"/>
    </location>
</feature>
<feature type="helix" evidence="15">
    <location>
        <begin position="177"/>
        <end position="188"/>
    </location>
</feature>
<feature type="turn" evidence="15">
    <location>
        <begin position="189"/>
        <end position="192"/>
    </location>
</feature>
<feature type="strand" evidence="15">
    <location>
        <begin position="193"/>
        <end position="198"/>
    </location>
</feature>
<feature type="helix" evidence="15">
    <location>
        <begin position="201"/>
        <end position="206"/>
    </location>
</feature>
<feature type="strand" evidence="15">
    <location>
        <begin position="214"/>
        <end position="217"/>
    </location>
</feature>
<feature type="strand" evidence="15">
    <location>
        <begin position="228"/>
        <end position="231"/>
    </location>
</feature>
<feature type="helix" evidence="15">
    <location>
        <begin position="234"/>
        <end position="243"/>
    </location>
</feature>
<feature type="strand" evidence="15">
    <location>
        <begin position="248"/>
        <end position="251"/>
    </location>
</feature>
<feature type="turn" evidence="15">
    <location>
        <begin position="254"/>
        <end position="256"/>
    </location>
</feature>
<feature type="helix" evidence="16">
    <location>
        <begin position="257"/>
        <end position="261"/>
    </location>
</feature>
<feature type="strand" evidence="15">
    <location>
        <begin position="269"/>
        <end position="273"/>
    </location>
</feature>
<feature type="helix" evidence="15">
    <location>
        <begin position="279"/>
        <end position="294"/>
    </location>
</feature>
<feature type="turn" evidence="16">
    <location>
        <begin position="295"/>
        <end position="297"/>
    </location>
</feature>
<feature type="strand" evidence="15">
    <location>
        <begin position="303"/>
        <end position="306"/>
    </location>
</feature>
<feature type="turn" evidence="15">
    <location>
        <begin position="308"/>
        <end position="310"/>
    </location>
</feature>
<feature type="helix" evidence="15">
    <location>
        <begin position="312"/>
        <end position="322"/>
    </location>
</feature>
<feature type="strand" evidence="15">
    <location>
        <begin position="330"/>
        <end position="334"/>
    </location>
</feature>
<feature type="turn" evidence="15">
    <location>
        <begin position="336"/>
        <end position="338"/>
    </location>
</feature>
<feature type="strand" evidence="15">
    <location>
        <begin position="341"/>
        <end position="343"/>
    </location>
</feature>
<feature type="helix" evidence="15">
    <location>
        <begin position="355"/>
        <end position="367"/>
    </location>
</feature>
<proteinExistence type="evidence at protein level"/>
<dbReference type="EMBL" id="D55655">
    <property type="protein sequence ID" value="BAA23494.1"/>
    <property type="molecule type" value="mRNA"/>
</dbReference>
<dbReference type="EMBL" id="AK295502">
    <property type="protein sequence ID" value="BAG58422.1"/>
    <property type="molecule type" value="mRNA"/>
</dbReference>
<dbReference type="EMBL" id="AK313041">
    <property type="protein sequence ID" value="BAG35873.1"/>
    <property type="molecule type" value="mRNA"/>
</dbReference>
<dbReference type="EMBL" id="AL449264">
    <property type="status" value="NOT_ANNOTATED_CDS"/>
    <property type="molecule type" value="Genomic_DNA"/>
</dbReference>
<dbReference type="EMBL" id="AL450389">
    <property type="status" value="NOT_ANNOTATED_CDS"/>
    <property type="molecule type" value="Genomic_DNA"/>
</dbReference>
<dbReference type="EMBL" id="CH471122">
    <property type="protein sequence ID" value="EAW56635.1"/>
    <property type="molecule type" value="Genomic_DNA"/>
</dbReference>
<dbReference type="EMBL" id="BC022288">
    <property type="protein sequence ID" value="AAH22288.1"/>
    <property type="molecule type" value="mRNA"/>
</dbReference>
<dbReference type="CCDS" id="CCDS884.1">
    <molecule id="O14958-1"/>
</dbReference>
<dbReference type="RefSeq" id="NP_001223.2">
    <molecule id="O14958-1"/>
    <property type="nucleotide sequence ID" value="NM_001232.4"/>
</dbReference>
<dbReference type="PDB" id="2VAF">
    <property type="method" value="X-ray"/>
    <property type="resolution" value="3.80 A"/>
    <property type="chains" value="A=22-399"/>
</dbReference>
<dbReference type="PDB" id="6OWV">
    <property type="method" value="X-ray"/>
    <property type="resolution" value="1.88 A"/>
    <property type="chains" value="A=18-399"/>
</dbReference>
<dbReference type="PDB" id="6OWW">
    <property type="method" value="X-ray"/>
    <property type="resolution" value="3.84 A"/>
    <property type="chains" value="A/B/C/D/E/F/G/H=18-399"/>
</dbReference>
<dbReference type="PDB" id="7F05">
    <property type="method" value="X-ray"/>
    <property type="resolution" value="2.30 A"/>
    <property type="chains" value="A/B/C/D=20-399"/>
</dbReference>
<dbReference type="PDBsum" id="2VAF"/>
<dbReference type="PDBsum" id="6OWV"/>
<dbReference type="PDBsum" id="6OWW"/>
<dbReference type="PDBsum" id="7F05"/>
<dbReference type="SMR" id="O14958"/>
<dbReference type="BioGRID" id="107295">
    <property type="interactions" value="65"/>
</dbReference>
<dbReference type="FunCoup" id="O14958">
    <property type="interactions" value="351"/>
</dbReference>
<dbReference type="IntAct" id="O14958">
    <property type="interactions" value="56"/>
</dbReference>
<dbReference type="MINT" id="O14958"/>
<dbReference type="STRING" id="9606.ENSP00000261448"/>
<dbReference type="DrugBank" id="DB11093">
    <property type="generic name" value="Calcium citrate"/>
</dbReference>
<dbReference type="DrugBank" id="DB11348">
    <property type="generic name" value="Calcium Phosphate"/>
</dbReference>
<dbReference type="DrugBank" id="DB14481">
    <property type="generic name" value="Calcium phosphate dihydrate"/>
</dbReference>
<dbReference type="TCDB" id="8.A.88.1.5">
    <property type="family name" value="the calciquestrin (casq) family"/>
</dbReference>
<dbReference type="GlyCosmos" id="O14958">
    <property type="glycosylation" value="1 site, No reported glycans"/>
</dbReference>
<dbReference type="GlyGen" id="O14958">
    <property type="glycosylation" value="1 site"/>
</dbReference>
<dbReference type="iPTMnet" id="O14958"/>
<dbReference type="PhosphoSitePlus" id="O14958"/>
<dbReference type="BioMuta" id="CASQ2"/>
<dbReference type="MassIVE" id="O14958"/>
<dbReference type="PaxDb" id="9606-ENSP00000261448"/>
<dbReference type="PeptideAtlas" id="O14958"/>
<dbReference type="ProteomicsDB" id="4290"/>
<dbReference type="ProteomicsDB" id="48335">
    <molecule id="O14958-1"/>
</dbReference>
<dbReference type="Antibodypedia" id="20176">
    <property type="antibodies" value="308 antibodies from 30 providers"/>
</dbReference>
<dbReference type="DNASU" id="845"/>
<dbReference type="Ensembl" id="ENST00000261448.6">
    <molecule id="O14958-1"/>
    <property type="protein sequence ID" value="ENSP00000261448.5"/>
    <property type="gene ID" value="ENSG00000118729.15"/>
</dbReference>
<dbReference type="GeneID" id="845"/>
<dbReference type="KEGG" id="hsa:845"/>
<dbReference type="MANE-Select" id="ENST00000261448.6">
    <property type="protein sequence ID" value="ENSP00000261448.5"/>
    <property type="RefSeq nucleotide sequence ID" value="NM_001232.4"/>
    <property type="RefSeq protein sequence ID" value="NP_001223.2"/>
</dbReference>
<dbReference type="UCSC" id="uc001efx.5">
    <molecule id="O14958-1"/>
    <property type="organism name" value="human"/>
</dbReference>
<dbReference type="AGR" id="HGNC:1513"/>
<dbReference type="CTD" id="845"/>
<dbReference type="DisGeNET" id="845"/>
<dbReference type="GeneCards" id="CASQ2"/>
<dbReference type="GeneReviews" id="CASQ2"/>
<dbReference type="HGNC" id="HGNC:1513">
    <property type="gene designation" value="CASQ2"/>
</dbReference>
<dbReference type="HPA" id="ENSG00000118729">
    <property type="expression patterns" value="Tissue enriched (heart)"/>
</dbReference>
<dbReference type="MalaCards" id="CASQ2"/>
<dbReference type="MIM" id="114251">
    <property type="type" value="gene"/>
</dbReference>
<dbReference type="MIM" id="611938">
    <property type="type" value="phenotype"/>
</dbReference>
<dbReference type="neXtProt" id="NX_O14958"/>
<dbReference type="OpenTargets" id="ENSG00000118729"/>
<dbReference type="Orphanet" id="3286">
    <property type="disease" value="Catecholaminergic polymorphic ventricular tachycardia"/>
</dbReference>
<dbReference type="PharmGKB" id="PA26096"/>
<dbReference type="VEuPathDB" id="HostDB:ENSG00000118729"/>
<dbReference type="eggNOG" id="ENOG502QU4Q">
    <property type="taxonomic scope" value="Eukaryota"/>
</dbReference>
<dbReference type="GeneTree" id="ENSGT00390000019377"/>
<dbReference type="HOGENOM" id="CLU_036303_1_0_1"/>
<dbReference type="InParanoid" id="O14958"/>
<dbReference type="OMA" id="CLYYHES"/>
<dbReference type="OrthoDB" id="10038131at2759"/>
<dbReference type="PAN-GO" id="O14958">
    <property type="GO annotations" value="4 GO annotations based on evolutionary models"/>
</dbReference>
<dbReference type="PhylomeDB" id="O14958"/>
<dbReference type="TreeFam" id="TF313796"/>
<dbReference type="PathwayCommons" id="O14958"/>
<dbReference type="Reactome" id="R-HSA-2672351">
    <property type="pathway name" value="Stimuli-sensing channels"/>
</dbReference>
<dbReference type="Reactome" id="R-HSA-5578775">
    <property type="pathway name" value="Ion homeostasis"/>
</dbReference>
<dbReference type="SignaLink" id="O14958"/>
<dbReference type="SIGNOR" id="O14958"/>
<dbReference type="BioGRID-ORCS" id="845">
    <property type="hits" value="18 hits in 1154 CRISPR screens"/>
</dbReference>
<dbReference type="ChiTaRS" id="CASQ2">
    <property type="organism name" value="human"/>
</dbReference>
<dbReference type="EvolutionaryTrace" id="O14958"/>
<dbReference type="GenomeRNAi" id="845"/>
<dbReference type="Pharos" id="O14958">
    <property type="development level" value="Tbio"/>
</dbReference>
<dbReference type="PRO" id="PR:O14958"/>
<dbReference type="Proteomes" id="UP000005640">
    <property type="component" value="Chromosome 1"/>
</dbReference>
<dbReference type="RNAct" id="O14958">
    <property type="molecule type" value="protein"/>
</dbReference>
<dbReference type="Bgee" id="ENSG00000118729">
    <property type="expression patterns" value="Expressed in heart right ventricle and 145 other cell types or tissues"/>
</dbReference>
<dbReference type="GO" id="GO:0034704">
    <property type="term" value="C:calcium channel complex"/>
    <property type="evidence" value="ECO:0000304"/>
    <property type="project" value="BHF-UCL"/>
</dbReference>
<dbReference type="GO" id="GO:0005737">
    <property type="term" value="C:cytoplasm"/>
    <property type="evidence" value="ECO:0000314"/>
    <property type="project" value="BHF-UCL"/>
</dbReference>
<dbReference type="GO" id="GO:0014701">
    <property type="term" value="C:junctional sarcoplasmic reticulum membrane"/>
    <property type="evidence" value="ECO:0000304"/>
    <property type="project" value="BHF-UCL"/>
</dbReference>
<dbReference type="GO" id="GO:0016529">
    <property type="term" value="C:sarcoplasmic reticulum"/>
    <property type="evidence" value="ECO:0000250"/>
    <property type="project" value="BHF-UCL"/>
</dbReference>
<dbReference type="GO" id="GO:0033018">
    <property type="term" value="C:sarcoplasmic reticulum lumen"/>
    <property type="evidence" value="ECO:0000318"/>
    <property type="project" value="GO_Central"/>
</dbReference>
<dbReference type="GO" id="GO:0033017">
    <property type="term" value="C:sarcoplasmic reticulum membrane"/>
    <property type="evidence" value="ECO:0000304"/>
    <property type="project" value="Reactome"/>
</dbReference>
<dbReference type="GO" id="GO:0030018">
    <property type="term" value="C:Z disc"/>
    <property type="evidence" value="ECO:0000250"/>
    <property type="project" value="BHF-UCL"/>
</dbReference>
<dbReference type="GO" id="GO:0005509">
    <property type="term" value="F:calcium ion binding"/>
    <property type="evidence" value="ECO:0000314"/>
    <property type="project" value="UniProtKB"/>
</dbReference>
<dbReference type="GO" id="GO:0140314">
    <property type="term" value="F:calcium ion sequestering activity"/>
    <property type="evidence" value="ECO:0000314"/>
    <property type="project" value="DisProt"/>
</dbReference>
<dbReference type="GO" id="GO:0048306">
    <property type="term" value="F:calcium-dependent protein binding"/>
    <property type="evidence" value="ECO:0000314"/>
    <property type="project" value="UniProtKB"/>
</dbReference>
<dbReference type="GO" id="GO:0042803">
    <property type="term" value="F:protein homodimerization activity"/>
    <property type="evidence" value="ECO:0000250"/>
    <property type="project" value="BHF-UCL"/>
</dbReference>
<dbReference type="GO" id="GO:0060048">
    <property type="term" value="P:cardiac muscle contraction"/>
    <property type="evidence" value="ECO:0000315"/>
    <property type="project" value="BHF-UCL"/>
</dbReference>
<dbReference type="GO" id="GO:0071313">
    <property type="term" value="P:cellular response to caffeine"/>
    <property type="evidence" value="ECO:0000315"/>
    <property type="project" value="BHF-UCL"/>
</dbReference>
<dbReference type="GO" id="GO:0005513">
    <property type="term" value="P:detection of calcium ion"/>
    <property type="evidence" value="ECO:0000304"/>
    <property type="project" value="BHF-UCL"/>
</dbReference>
<dbReference type="GO" id="GO:0006874">
    <property type="term" value="P:intracellular calcium ion homeostasis"/>
    <property type="evidence" value="ECO:0000315"/>
    <property type="project" value="BHF-UCL"/>
</dbReference>
<dbReference type="GO" id="GO:0043267">
    <property type="term" value="P:negative regulation of potassium ion transport"/>
    <property type="evidence" value="ECO:0000250"/>
    <property type="project" value="BHF-UCL"/>
</dbReference>
<dbReference type="GO" id="GO:0051258">
    <property type="term" value="P:protein polymerization"/>
    <property type="evidence" value="ECO:0000314"/>
    <property type="project" value="UniProtKB"/>
</dbReference>
<dbReference type="GO" id="GO:0086029">
    <property type="term" value="P:Purkinje myocyte to ventricular cardiac muscle cell signaling"/>
    <property type="evidence" value="ECO:0000303"/>
    <property type="project" value="BHF-UCL"/>
</dbReference>
<dbReference type="GO" id="GO:0010881">
    <property type="term" value="P:regulation of cardiac muscle contraction by regulation of the release of sequestered calcium ion"/>
    <property type="evidence" value="ECO:0000314"/>
    <property type="project" value="BHF-UCL"/>
</dbReference>
<dbReference type="GO" id="GO:0010649">
    <property type="term" value="P:regulation of cell communication by electrical coupling"/>
    <property type="evidence" value="ECO:0000315"/>
    <property type="project" value="BHF-UCL"/>
</dbReference>
<dbReference type="GO" id="GO:0002027">
    <property type="term" value="P:regulation of heart rate"/>
    <property type="evidence" value="ECO:0000315"/>
    <property type="project" value="UniProtKB"/>
</dbReference>
<dbReference type="GO" id="GO:0060306">
    <property type="term" value="P:regulation of membrane repolarization"/>
    <property type="evidence" value="ECO:0000250"/>
    <property type="project" value="BHF-UCL"/>
</dbReference>
<dbReference type="GO" id="GO:1905024">
    <property type="term" value="P:regulation of membrane repolarization during ventricular cardiac muscle cell action potential"/>
    <property type="evidence" value="ECO:0000250"/>
    <property type="project" value="BHF-UCL"/>
</dbReference>
<dbReference type="GO" id="GO:0010880">
    <property type="term" value="P:regulation of release of sequestered calcium ion into cytosol by sarcoplasmic reticulum"/>
    <property type="evidence" value="ECO:0000250"/>
    <property type="project" value="BHF-UCL"/>
</dbReference>
<dbReference type="GO" id="GO:0051208">
    <property type="term" value="P:sequestering of calcium ion"/>
    <property type="evidence" value="ECO:0000314"/>
    <property type="project" value="BHF-UCL"/>
</dbReference>
<dbReference type="GO" id="GO:0006941">
    <property type="term" value="P:striated muscle contraction"/>
    <property type="evidence" value="ECO:0000304"/>
    <property type="project" value="ProtInc"/>
</dbReference>
<dbReference type="CDD" id="cd03074">
    <property type="entry name" value="PDI_b'_Calsequestrin_C"/>
    <property type="match status" value="1"/>
</dbReference>
<dbReference type="CDD" id="cd03066">
    <property type="entry name" value="PDI_b_Calsequestrin_middle"/>
    <property type="match status" value="1"/>
</dbReference>
<dbReference type="CDD" id="cd03065">
    <property type="entry name" value="PDI_b_Calsequestrin_N"/>
    <property type="match status" value="1"/>
</dbReference>
<dbReference type="DisProt" id="DP02630"/>
<dbReference type="FunFam" id="3.40.30.10:FF:000031">
    <property type="entry name" value="Calsequestrin"/>
    <property type="match status" value="1"/>
</dbReference>
<dbReference type="FunFam" id="3.40.30.10:FF:000033">
    <property type="entry name" value="Calsequestrin"/>
    <property type="match status" value="1"/>
</dbReference>
<dbReference type="FunFam" id="3.40.30.10:FF:000047">
    <property type="entry name" value="Calsequestrin"/>
    <property type="match status" value="1"/>
</dbReference>
<dbReference type="Gene3D" id="3.40.30.10">
    <property type="entry name" value="Glutaredoxin"/>
    <property type="match status" value="3"/>
</dbReference>
<dbReference type="InterPro" id="IPR001393">
    <property type="entry name" value="Calsequestrin"/>
</dbReference>
<dbReference type="InterPro" id="IPR041860">
    <property type="entry name" value="Calsequestrin_C"/>
</dbReference>
<dbReference type="InterPro" id="IPR018233">
    <property type="entry name" value="Calsequestrin_CS"/>
</dbReference>
<dbReference type="InterPro" id="IPR041858">
    <property type="entry name" value="Calsequestrin_middle_dom"/>
</dbReference>
<dbReference type="InterPro" id="IPR041859">
    <property type="entry name" value="Calsequestrin_N"/>
</dbReference>
<dbReference type="InterPro" id="IPR036249">
    <property type="entry name" value="Thioredoxin-like_sf"/>
</dbReference>
<dbReference type="PANTHER" id="PTHR10033">
    <property type="entry name" value="CALSEQUESTRIN"/>
    <property type="match status" value="1"/>
</dbReference>
<dbReference type="PANTHER" id="PTHR10033:SF15">
    <property type="entry name" value="CALSEQUESTRIN-2"/>
    <property type="match status" value="1"/>
</dbReference>
<dbReference type="Pfam" id="PF01216">
    <property type="entry name" value="Calsequestrin"/>
    <property type="match status" value="1"/>
</dbReference>
<dbReference type="PRINTS" id="PR00312">
    <property type="entry name" value="CALSEQUESTRN"/>
</dbReference>
<dbReference type="SUPFAM" id="SSF52833">
    <property type="entry name" value="Thioredoxin-like"/>
    <property type="match status" value="3"/>
</dbReference>
<dbReference type="PROSITE" id="PS00863">
    <property type="entry name" value="CALSEQUESTRIN_1"/>
    <property type="match status" value="1"/>
</dbReference>
<dbReference type="PROSITE" id="PS00864">
    <property type="entry name" value="CALSEQUESTRIN_2"/>
    <property type="match status" value="1"/>
</dbReference>
<evidence type="ECO:0000250" key="1"/>
<evidence type="ECO:0000250" key="2">
    <source>
        <dbReference type="UniProtKB" id="O09161"/>
    </source>
</evidence>
<evidence type="ECO:0000255" key="3"/>
<evidence type="ECO:0000256" key="4">
    <source>
        <dbReference type="SAM" id="MobiDB-lite"/>
    </source>
</evidence>
<evidence type="ECO:0000269" key="5">
    <source>
    </source>
</evidence>
<evidence type="ECO:0000269" key="6">
    <source>
    </source>
</evidence>
<evidence type="ECO:0000269" key="7">
    <source>
    </source>
</evidence>
<evidence type="ECO:0000269" key="8">
    <source>
    </source>
</evidence>
<evidence type="ECO:0000269" key="9">
    <source>
    </source>
</evidence>
<evidence type="ECO:0000269" key="10">
    <source>
    </source>
</evidence>
<evidence type="ECO:0000269" key="11">
    <source>
    </source>
</evidence>
<evidence type="ECO:0000269" key="12">
    <source>
    </source>
</evidence>
<evidence type="ECO:0000303" key="13">
    <source>
    </source>
</evidence>
<evidence type="ECO:0000305" key="14"/>
<evidence type="ECO:0007829" key="15">
    <source>
        <dbReference type="PDB" id="6OWV"/>
    </source>
</evidence>
<evidence type="ECO:0007829" key="16">
    <source>
        <dbReference type="PDB" id="7F05"/>
    </source>
</evidence>
<comment type="function">
    <text evidence="8 9 10 11">Calsequestrin is a high-capacity, moderate affinity, calcium-binding protein and thus acts as an internal calcium store in muscle. Calcium ions are bound by clusters of acidic residues at the protein surface, especially at the interface between subunits. Can bind around 60 Ca(2+) ions. Regulates the release of lumenal Ca(2+) via the calcium release channel RYR2; this plays an important role in triggering muscle contraction. Plays a role in excitation-contraction coupling in the heart and in regulating the rate of heart beats.</text>
</comment>
<comment type="subunit">
    <text evidence="7 9 11">Monomer, homodimer and homooligomer. Mostly monomeric in the absence of calcium. Forms higher oligomers in a calcium-dependent manner. Dimers associate to form tetramers, that then form linear homomer chains. Interacts with ASPH and TRDN.</text>
</comment>
<comment type="interaction">
    <interactant intactId="EBI-6859557">
        <id>O14958</id>
    </interactant>
    <interactant intactId="EBI-358049">
        <id>Q13895</id>
        <label>BYSL</label>
    </interactant>
    <organismsDiffer>false</organismsDiffer>
    <experiments>3</experiments>
</comment>
<comment type="subcellular location">
    <subcellularLocation>
        <location evidence="2">Sarcoplasmic reticulum lumen</location>
    </subcellularLocation>
    <text evidence="2">This isoform of calsequestrin occurs in the sarcoplasmic reticulum's terminal cisternae luminal spaces of cardiac and slow skeletal muscle cells.</text>
</comment>
<comment type="alternative products">
    <event type="alternative splicing"/>
    <isoform>
        <id>O14958-1</id>
        <name>1</name>
        <sequence type="displayed"/>
    </isoform>
    <isoform>
        <id>O14958-2</id>
        <name>2</name>
        <sequence type="described" ref="VSP_056477"/>
    </isoform>
</comment>
<comment type="PTM">
    <text evidence="11">Phosphorylation in the C-terminus, probably by CK2, moderately increases calcium buffering capacity.</text>
</comment>
<comment type="PTM">
    <text evidence="7">N-glycosylated.</text>
</comment>
<comment type="disease" evidence="5 7 8 9 10 12">
    <disease id="DI-00250">
        <name>Ventricular tachycardia, catecholaminergic polymorphic, 2</name>
        <acronym>CPVT2</acronym>
        <description>An arrhythmogenic disorder characterized by stress-induced, bidirectional ventricular tachycardia that may degenerate into cardiac arrest and cause sudden death. Patients present with recurrent syncope, seizures, or sudden death after physical activity or emotional stress. CPVT2 inheritance is autosomal recessive.</description>
        <dbReference type="MIM" id="611938"/>
    </disease>
    <text>The disease is caused by variants affecting the gene represented in this entry.</text>
</comment>
<comment type="similarity">
    <text evidence="14">Belongs to the calsequestrin family.</text>
</comment>
<comment type="online information" name="Wikipedia">
    <link uri="https://en.wikipedia.org/wiki/Calsequestrin"/>
    <text>Calsequestrin entry</text>
</comment>
<organism>
    <name type="scientific">Homo sapiens</name>
    <name type="common">Human</name>
    <dbReference type="NCBI Taxonomy" id="9606"/>
    <lineage>
        <taxon>Eukaryota</taxon>
        <taxon>Metazoa</taxon>
        <taxon>Chordata</taxon>
        <taxon>Craniata</taxon>
        <taxon>Vertebrata</taxon>
        <taxon>Euteleostomi</taxon>
        <taxon>Mammalia</taxon>
        <taxon>Eutheria</taxon>
        <taxon>Euarchontoglires</taxon>
        <taxon>Primates</taxon>
        <taxon>Haplorrhini</taxon>
        <taxon>Catarrhini</taxon>
        <taxon>Hominidae</taxon>
        <taxon>Homo</taxon>
    </lineage>
</organism>
<reference key="1">
    <citation type="submission" date="1995-06" db="EMBL/GenBank/DDBJ databases">
        <title>Molecular cloning of a human cDNA for cardiac calsequestrin and its chromosomal assignment to 1p13.3 by fluorescence in situ hybridization.</title>
        <authorList>
            <person name="Tanaka T."/>
            <person name="Inazawa J."/>
            <person name="Nakamura Y."/>
        </authorList>
    </citation>
    <scope>NUCLEOTIDE SEQUENCE [MRNA] (ISOFORM 1)</scope>
    <source>
        <tissue>Heart</tissue>
    </source>
</reference>
<reference key="2">
    <citation type="journal article" date="2004" name="Nat. Genet.">
        <title>Complete sequencing and characterization of 21,243 full-length human cDNAs.</title>
        <authorList>
            <person name="Ota T."/>
            <person name="Suzuki Y."/>
            <person name="Nishikawa T."/>
            <person name="Otsuki T."/>
            <person name="Sugiyama T."/>
            <person name="Irie R."/>
            <person name="Wakamatsu A."/>
            <person name="Hayashi K."/>
            <person name="Sato H."/>
            <person name="Nagai K."/>
            <person name="Kimura K."/>
            <person name="Makita H."/>
            <person name="Sekine M."/>
            <person name="Obayashi M."/>
            <person name="Nishi T."/>
            <person name="Shibahara T."/>
            <person name="Tanaka T."/>
            <person name="Ishii S."/>
            <person name="Yamamoto J."/>
            <person name="Saito K."/>
            <person name="Kawai Y."/>
            <person name="Isono Y."/>
            <person name="Nakamura Y."/>
            <person name="Nagahari K."/>
            <person name="Murakami K."/>
            <person name="Yasuda T."/>
            <person name="Iwayanagi T."/>
            <person name="Wagatsuma M."/>
            <person name="Shiratori A."/>
            <person name="Sudo H."/>
            <person name="Hosoiri T."/>
            <person name="Kaku Y."/>
            <person name="Kodaira H."/>
            <person name="Kondo H."/>
            <person name="Sugawara M."/>
            <person name="Takahashi M."/>
            <person name="Kanda K."/>
            <person name="Yokoi T."/>
            <person name="Furuya T."/>
            <person name="Kikkawa E."/>
            <person name="Omura Y."/>
            <person name="Abe K."/>
            <person name="Kamihara K."/>
            <person name="Katsuta N."/>
            <person name="Sato K."/>
            <person name="Tanikawa M."/>
            <person name="Yamazaki M."/>
            <person name="Ninomiya K."/>
            <person name="Ishibashi T."/>
            <person name="Yamashita H."/>
            <person name="Murakawa K."/>
            <person name="Fujimori K."/>
            <person name="Tanai H."/>
            <person name="Kimata M."/>
            <person name="Watanabe M."/>
            <person name="Hiraoka S."/>
            <person name="Chiba Y."/>
            <person name="Ishida S."/>
            <person name="Ono Y."/>
            <person name="Takiguchi S."/>
            <person name="Watanabe S."/>
            <person name="Yosida M."/>
            <person name="Hotuta T."/>
            <person name="Kusano J."/>
            <person name="Kanehori K."/>
            <person name="Takahashi-Fujii A."/>
            <person name="Hara H."/>
            <person name="Tanase T.-O."/>
            <person name="Nomura Y."/>
            <person name="Togiya S."/>
            <person name="Komai F."/>
            <person name="Hara R."/>
            <person name="Takeuchi K."/>
            <person name="Arita M."/>
            <person name="Imose N."/>
            <person name="Musashino K."/>
            <person name="Yuuki H."/>
            <person name="Oshima A."/>
            <person name="Sasaki N."/>
            <person name="Aotsuka S."/>
            <person name="Yoshikawa Y."/>
            <person name="Matsunawa H."/>
            <person name="Ichihara T."/>
            <person name="Shiohata N."/>
            <person name="Sano S."/>
            <person name="Moriya S."/>
            <person name="Momiyama H."/>
            <person name="Satoh N."/>
            <person name="Takami S."/>
            <person name="Terashima Y."/>
            <person name="Suzuki O."/>
            <person name="Nakagawa S."/>
            <person name="Senoh A."/>
            <person name="Mizoguchi H."/>
            <person name="Goto Y."/>
            <person name="Shimizu F."/>
            <person name="Wakebe H."/>
            <person name="Hishigaki H."/>
            <person name="Watanabe T."/>
            <person name="Sugiyama A."/>
            <person name="Takemoto M."/>
            <person name="Kawakami B."/>
            <person name="Yamazaki M."/>
            <person name="Watanabe K."/>
            <person name="Kumagai A."/>
            <person name="Itakura S."/>
            <person name="Fukuzumi Y."/>
            <person name="Fujimori Y."/>
            <person name="Komiyama M."/>
            <person name="Tashiro H."/>
            <person name="Tanigami A."/>
            <person name="Fujiwara T."/>
            <person name="Ono T."/>
            <person name="Yamada K."/>
            <person name="Fujii Y."/>
            <person name="Ozaki K."/>
            <person name="Hirao M."/>
            <person name="Ohmori Y."/>
            <person name="Kawabata A."/>
            <person name="Hikiji T."/>
            <person name="Kobatake N."/>
            <person name="Inagaki H."/>
            <person name="Ikema Y."/>
            <person name="Okamoto S."/>
            <person name="Okitani R."/>
            <person name="Kawakami T."/>
            <person name="Noguchi S."/>
            <person name="Itoh T."/>
            <person name="Shigeta K."/>
            <person name="Senba T."/>
            <person name="Matsumura K."/>
            <person name="Nakajima Y."/>
            <person name="Mizuno T."/>
            <person name="Morinaga M."/>
            <person name="Sasaki M."/>
            <person name="Togashi T."/>
            <person name="Oyama M."/>
            <person name="Hata H."/>
            <person name="Watanabe M."/>
            <person name="Komatsu T."/>
            <person name="Mizushima-Sugano J."/>
            <person name="Satoh T."/>
            <person name="Shirai Y."/>
            <person name="Takahashi Y."/>
            <person name="Nakagawa K."/>
            <person name="Okumura K."/>
            <person name="Nagase T."/>
            <person name="Nomura N."/>
            <person name="Kikuchi H."/>
            <person name="Masuho Y."/>
            <person name="Yamashita R."/>
            <person name="Nakai K."/>
            <person name="Yada T."/>
            <person name="Nakamura Y."/>
            <person name="Ohara O."/>
            <person name="Isogai T."/>
            <person name="Sugano S."/>
        </authorList>
    </citation>
    <scope>NUCLEOTIDE SEQUENCE [LARGE SCALE MRNA] (ISOFORMS 1 AND 2)</scope>
    <source>
        <tissue>Brain</tissue>
        <tissue>Hippocampus</tissue>
    </source>
</reference>
<reference key="3">
    <citation type="journal article" date="2006" name="Nature">
        <title>The DNA sequence and biological annotation of human chromosome 1.</title>
        <authorList>
            <person name="Gregory S.G."/>
            <person name="Barlow K.F."/>
            <person name="McLay K.E."/>
            <person name="Kaul R."/>
            <person name="Swarbreck D."/>
            <person name="Dunham A."/>
            <person name="Scott C.E."/>
            <person name="Howe K.L."/>
            <person name="Woodfine K."/>
            <person name="Spencer C.C.A."/>
            <person name="Jones M.C."/>
            <person name="Gillson C."/>
            <person name="Searle S."/>
            <person name="Zhou Y."/>
            <person name="Kokocinski F."/>
            <person name="McDonald L."/>
            <person name="Evans R."/>
            <person name="Phillips K."/>
            <person name="Atkinson A."/>
            <person name="Cooper R."/>
            <person name="Jones C."/>
            <person name="Hall R.E."/>
            <person name="Andrews T.D."/>
            <person name="Lloyd C."/>
            <person name="Ainscough R."/>
            <person name="Almeida J.P."/>
            <person name="Ambrose K.D."/>
            <person name="Anderson F."/>
            <person name="Andrew R.W."/>
            <person name="Ashwell R.I.S."/>
            <person name="Aubin K."/>
            <person name="Babbage A.K."/>
            <person name="Bagguley C.L."/>
            <person name="Bailey J."/>
            <person name="Beasley H."/>
            <person name="Bethel G."/>
            <person name="Bird C.P."/>
            <person name="Bray-Allen S."/>
            <person name="Brown J.Y."/>
            <person name="Brown A.J."/>
            <person name="Buckley D."/>
            <person name="Burton J."/>
            <person name="Bye J."/>
            <person name="Carder C."/>
            <person name="Chapman J.C."/>
            <person name="Clark S.Y."/>
            <person name="Clarke G."/>
            <person name="Clee C."/>
            <person name="Cobley V."/>
            <person name="Collier R.E."/>
            <person name="Corby N."/>
            <person name="Coville G.J."/>
            <person name="Davies J."/>
            <person name="Deadman R."/>
            <person name="Dunn M."/>
            <person name="Earthrowl M."/>
            <person name="Ellington A.G."/>
            <person name="Errington H."/>
            <person name="Frankish A."/>
            <person name="Frankland J."/>
            <person name="French L."/>
            <person name="Garner P."/>
            <person name="Garnett J."/>
            <person name="Gay L."/>
            <person name="Ghori M.R.J."/>
            <person name="Gibson R."/>
            <person name="Gilby L.M."/>
            <person name="Gillett W."/>
            <person name="Glithero R.J."/>
            <person name="Grafham D.V."/>
            <person name="Griffiths C."/>
            <person name="Griffiths-Jones S."/>
            <person name="Grocock R."/>
            <person name="Hammond S."/>
            <person name="Harrison E.S.I."/>
            <person name="Hart E."/>
            <person name="Haugen E."/>
            <person name="Heath P.D."/>
            <person name="Holmes S."/>
            <person name="Holt K."/>
            <person name="Howden P.J."/>
            <person name="Hunt A.R."/>
            <person name="Hunt S.E."/>
            <person name="Hunter G."/>
            <person name="Isherwood J."/>
            <person name="James R."/>
            <person name="Johnson C."/>
            <person name="Johnson D."/>
            <person name="Joy A."/>
            <person name="Kay M."/>
            <person name="Kershaw J.K."/>
            <person name="Kibukawa M."/>
            <person name="Kimberley A.M."/>
            <person name="King A."/>
            <person name="Knights A.J."/>
            <person name="Lad H."/>
            <person name="Laird G."/>
            <person name="Lawlor S."/>
            <person name="Leongamornlert D.A."/>
            <person name="Lloyd D.M."/>
            <person name="Loveland J."/>
            <person name="Lovell J."/>
            <person name="Lush M.J."/>
            <person name="Lyne R."/>
            <person name="Martin S."/>
            <person name="Mashreghi-Mohammadi M."/>
            <person name="Matthews L."/>
            <person name="Matthews N.S.W."/>
            <person name="McLaren S."/>
            <person name="Milne S."/>
            <person name="Mistry S."/>
            <person name="Moore M.J.F."/>
            <person name="Nickerson T."/>
            <person name="O'Dell C.N."/>
            <person name="Oliver K."/>
            <person name="Palmeiri A."/>
            <person name="Palmer S.A."/>
            <person name="Parker A."/>
            <person name="Patel D."/>
            <person name="Pearce A.V."/>
            <person name="Peck A.I."/>
            <person name="Pelan S."/>
            <person name="Phelps K."/>
            <person name="Phillimore B.J."/>
            <person name="Plumb R."/>
            <person name="Rajan J."/>
            <person name="Raymond C."/>
            <person name="Rouse G."/>
            <person name="Saenphimmachak C."/>
            <person name="Sehra H.K."/>
            <person name="Sheridan E."/>
            <person name="Shownkeen R."/>
            <person name="Sims S."/>
            <person name="Skuce C.D."/>
            <person name="Smith M."/>
            <person name="Steward C."/>
            <person name="Subramanian S."/>
            <person name="Sycamore N."/>
            <person name="Tracey A."/>
            <person name="Tromans A."/>
            <person name="Van Helmond Z."/>
            <person name="Wall M."/>
            <person name="Wallis J.M."/>
            <person name="White S."/>
            <person name="Whitehead S.L."/>
            <person name="Wilkinson J.E."/>
            <person name="Willey D.L."/>
            <person name="Williams H."/>
            <person name="Wilming L."/>
            <person name="Wray P.W."/>
            <person name="Wu Z."/>
            <person name="Coulson A."/>
            <person name="Vaudin M."/>
            <person name="Sulston J.E."/>
            <person name="Durbin R.M."/>
            <person name="Hubbard T."/>
            <person name="Wooster R."/>
            <person name="Dunham I."/>
            <person name="Carter N.P."/>
            <person name="McVean G."/>
            <person name="Ross M.T."/>
            <person name="Harrow J."/>
            <person name="Olson M.V."/>
            <person name="Beck S."/>
            <person name="Rogers J."/>
            <person name="Bentley D.R."/>
        </authorList>
    </citation>
    <scope>NUCLEOTIDE SEQUENCE [LARGE SCALE GENOMIC DNA]</scope>
</reference>
<reference key="4">
    <citation type="submission" date="2005-07" db="EMBL/GenBank/DDBJ databases">
        <authorList>
            <person name="Mural R.J."/>
            <person name="Istrail S."/>
            <person name="Sutton G.G."/>
            <person name="Florea L."/>
            <person name="Halpern A.L."/>
            <person name="Mobarry C.M."/>
            <person name="Lippert R."/>
            <person name="Walenz B."/>
            <person name="Shatkay H."/>
            <person name="Dew I."/>
            <person name="Miller J.R."/>
            <person name="Flanigan M.J."/>
            <person name="Edwards N.J."/>
            <person name="Bolanos R."/>
            <person name="Fasulo D."/>
            <person name="Halldorsson B.V."/>
            <person name="Hannenhalli S."/>
            <person name="Turner R."/>
            <person name="Yooseph S."/>
            <person name="Lu F."/>
            <person name="Nusskern D.R."/>
            <person name="Shue B.C."/>
            <person name="Zheng X.H."/>
            <person name="Zhong F."/>
            <person name="Delcher A.L."/>
            <person name="Huson D.H."/>
            <person name="Kravitz S.A."/>
            <person name="Mouchard L."/>
            <person name="Reinert K."/>
            <person name="Remington K.A."/>
            <person name="Clark A.G."/>
            <person name="Waterman M.S."/>
            <person name="Eichler E.E."/>
            <person name="Adams M.D."/>
            <person name="Hunkapiller M.W."/>
            <person name="Myers E.W."/>
            <person name="Venter J.C."/>
        </authorList>
    </citation>
    <scope>NUCLEOTIDE SEQUENCE [LARGE SCALE GENOMIC DNA]</scope>
</reference>
<reference key="5">
    <citation type="journal article" date="2004" name="Genome Res.">
        <title>The status, quality, and expansion of the NIH full-length cDNA project: the Mammalian Gene Collection (MGC).</title>
        <authorList>
            <consortium name="The MGC Project Team"/>
        </authorList>
    </citation>
    <scope>NUCLEOTIDE SEQUENCE [LARGE SCALE MRNA] (ISOFORM 1)</scope>
    <source>
        <tissue>Skeletal muscle</tissue>
    </source>
</reference>
<reference key="6">
    <citation type="journal article" date="2008" name="Proc. Natl. Acad. Sci. U.S.A.">
        <title>A quantitative atlas of mitotic phosphorylation.</title>
        <authorList>
            <person name="Dephoure N."/>
            <person name="Zhou C."/>
            <person name="Villen J."/>
            <person name="Beausoleil S.A."/>
            <person name="Bakalarski C.E."/>
            <person name="Elledge S.J."/>
            <person name="Gygi S.P."/>
        </authorList>
    </citation>
    <scope>IDENTIFICATION BY MASS SPECTROMETRY [LARGE SCALE ANALYSIS]</scope>
    <source>
        <tissue>Cervix carcinoma</tissue>
    </source>
</reference>
<reference key="7">
    <citation type="journal article" date="2011" name="Mol. Cell. Biochem.">
        <title>Phosphorylation of human calsequestrin: implications for calcium regulation.</title>
        <authorList>
            <person name="Sanchez E.J."/>
            <person name="Munske G.R."/>
            <person name="Criswell A."/>
            <person name="Milting H."/>
            <person name="Dunker A.K."/>
            <person name="Kang C."/>
        </authorList>
    </citation>
    <scope>PHOSPHORYLATION AT SER-385 AND SER-393</scope>
    <scope>FUNCTION</scope>
    <scope>SUBUNIT</scope>
</reference>
<reference key="8">
    <citation type="journal article" date="2007" name="J. Mol. Biol.">
        <title>Characterization of human cardiac calsequestrin and its deleterious mutants.</title>
        <authorList>
            <person name="Kim E."/>
            <person name="Youn B."/>
            <person name="Kemper L."/>
            <person name="Campbell C."/>
            <person name="Milting H."/>
            <person name="Varsanyi M."/>
            <person name="Kang C."/>
        </authorList>
    </citation>
    <scope>X-RAY CRYSTALLOGRAPHY (3.8 ANGSTROMS) OF 22-399</scope>
    <scope>SUBUNIT</scope>
    <scope>FUNCTION</scope>
    <scope>CHARACTERIZATION OF VARIANTS CPVT2 GLN-33; HIS-167 AND HIS-307</scope>
    <scope>CHARACTERIZATION OF VARIANTS ALA-66 AND MET-76</scope>
</reference>
<reference key="9">
    <citation type="journal article" date="2001" name="Am. J. Hum. Genet.">
        <title>A missense mutation in a highly conserved region of CASQ2 is associated with autosomal recessive catecholamine-induced polymorphic ventricular tachycardia in Bedouin families from Israel.</title>
        <authorList>
            <person name="Lahat H."/>
            <person name="Pras E."/>
            <person name="Olender T."/>
            <person name="Avidan N."/>
            <person name="Ben-Asher E."/>
            <person name="Man O."/>
            <person name="Levy-Nissenbaum E."/>
            <person name="Khoury A."/>
            <person name="Lorber A."/>
            <person name="Goldman B."/>
            <person name="Lancet D."/>
            <person name="Eldar M."/>
        </authorList>
    </citation>
    <scope>VARIANT CPVT2 HIS-307</scope>
</reference>
<reference key="10">
    <citation type="journal article" date="2003" name="Eur. J. Hum. Genet.">
        <title>Molecular genetics of exercise-induced polymorphic ventricular tachycardia: identification of three novel cardiac ryanodine receptor mutations and two common calsequestrin 2 amino-acid polymorphisms.</title>
        <authorList>
            <person name="Laitinen P.J."/>
            <person name="Swan H."/>
            <person name="Kontula K."/>
        </authorList>
    </citation>
    <scope>VARIANTS ALA-66 AND MET-76</scope>
</reference>
<reference key="11">
    <citation type="journal article" date="2004" name="Cardiovasc. Res.">
        <title>Calsequestrin mutant D307H exhibits depressed binding to its protein targets and a depressed response to calcium.</title>
        <authorList>
            <person name="Houle T.D."/>
            <person name="Ram M.L."/>
            <person name="Cala S.E."/>
        </authorList>
    </citation>
    <scope>CHARACTERIZATION OF VARIANT CPVT2 HIS-307</scope>
    <scope>INTERACTION WITH ASPH AND TRDN</scope>
    <scope>GLYCOSYLATION</scope>
    <scope>IDENTIFICATION BY MASS SPECTROMETRY</scope>
</reference>
<reference key="12">
    <citation type="journal article" date="2006" name="Circulation">
        <title>Clinical phenotype and functional characterization of CASQ2 mutations associated with catecholaminergic polymorphic ventricular tachycardia.</title>
        <authorList>
            <person name="di Barletta M.R."/>
            <person name="Viatchenko-Karpinski S."/>
            <person name="Nori A."/>
            <person name="Memmi M."/>
            <person name="Terentyev D."/>
            <person name="Turcato F."/>
            <person name="Valle G."/>
            <person name="Rizzi N."/>
            <person name="Napolitano C."/>
            <person name="Gyorke S."/>
            <person name="Volpe P."/>
            <person name="Priori S.G."/>
        </authorList>
    </citation>
    <scope>VARIANT CPVT2 HIS-167</scope>
    <scope>CHARACTERIZATION OF VARIANT CPVT2 HIS-167</scope>
    <scope>FUNCTION</scope>
</reference>
<reference key="13">
    <citation type="journal article" date="2008" name="Biochem. J.">
        <title>Catecholaminergic polymorphic ventricular tachycardia-related mutations R33Q and L167H alter calcium sensitivity of human cardiac calsequestrin.</title>
        <authorList>
            <person name="Valle G."/>
            <person name="Galla D."/>
            <person name="Nori A."/>
            <person name="Priori S.G."/>
            <person name="Gyorke S."/>
            <person name="de Filippis V."/>
            <person name="Volpe P."/>
        </authorList>
    </citation>
    <scope>VARIANTS CPVT2 GLN-33 AND HIS-167</scope>
    <scope>CHARACTERIZATION OF VARIANTS CPVT2 GLN-33 AND HIS-167</scope>
    <scope>FUNCTION</scope>
</reference>
<reference key="14">
    <citation type="journal article" date="2016" name="Heart Rhythm">
        <title>A novel heterozygous mutation in cardiac calsequestrin causes autosomal dominant catecholaminergic polymorphic ventricular tachycardia.</title>
        <authorList>
            <person name="Gray B."/>
            <person name="Bagnall R.D."/>
            <person name="Lam L."/>
            <person name="Ingles J."/>
            <person name="Turner C."/>
            <person name="Haan E."/>
            <person name="Davis A."/>
            <person name="Yang P.C."/>
            <person name="Clancy C.E."/>
            <person name="Sy R.W."/>
            <person name="Semsarian C."/>
        </authorList>
    </citation>
    <scope>VARIANT CPVT2 ARG-180</scope>
</reference>